<protein>
    <recommendedName>
        <fullName evidence="1">Type II restriction enzyme HaeII</fullName>
        <shortName>R.HaeII</shortName>
        <ecNumber>3.1.21.4</ecNumber>
    </recommendedName>
    <alternativeName>
        <fullName>Endonuclease HaeII</fullName>
    </alternativeName>
    <alternativeName>
        <fullName>Type-2 restriction enzyme HaeII</fullName>
    </alternativeName>
</protein>
<dbReference type="EC" id="3.1.21.4"/>
<dbReference type="EMBL" id="AF019752">
    <property type="protein sequence ID" value="AAB70830.1"/>
    <property type="molecule type" value="Genomic_DNA"/>
</dbReference>
<dbReference type="RefSeq" id="WP_065250747.1">
    <property type="nucleotide sequence ID" value="NZ_LZPG01000012.1"/>
</dbReference>
<dbReference type="REBASE" id="1088">
    <property type="entry name" value="HaeII"/>
</dbReference>
<dbReference type="PRO" id="PR:O30869"/>
<dbReference type="GO" id="GO:0009036">
    <property type="term" value="F:type II site-specific deoxyribonuclease activity"/>
    <property type="evidence" value="ECO:0007669"/>
    <property type="project" value="UniProtKB-EC"/>
</dbReference>
<dbReference type="GO" id="GO:0009307">
    <property type="term" value="P:DNA restriction-modification system"/>
    <property type="evidence" value="ECO:0007669"/>
    <property type="project" value="UniProtKB-KW"/>
</dbReference>
<dbReference type="InterPro" id="IPR019058">
    <property type="entry name" value="Restrct_endonuc_II_HaeII"/>
</dbReference>
<dbReference type="Pfam" id="PF09554">
    <property type="entry name" value="RE_HaeII"/>
    <property type="match status" value="1"/>
</dbReference>
<reference key="1">
    <citation type="journal article" date="1998" name="Biol. Chem.">
        <title>Sequence similarities between the genes encoding the S.NgoI and HaeII restriction/modification systems.</title>
        <authorList>
            <person name="Stein D.C."/>
            <person name="Gunn J.S."/>
            <person name="Piekarowicz A."/>
        </authorList>
    </citation>
    <scope>NUCLEOTIDE SEQUENCE [GENOMIC DNA]</scope>
    <source>
        <strain>ATCC 11116 / CCUG 25716 / NCTC 8502 / 180-a</strain>
    </source>
</reference>
<reference key="2">
    <citation type="journal article" date="2003" name="Nucleic Acids Res.">
        <title>A nomenclature for restriction enzymes, DNA methyltransferases, homing endonucleases and their genes.</title>
        <authorList>
            <person name="Roberts R.J."/>
            <person name="Belfort M."/>
            <person name="Bestor T."/>
            <person name="Bhagwat A.S."/>
            <person name="Bickle T.A."/>
            <person name="Bitinaite J."/>
            <person name="Blumenthal R.M."/>
            <person name="Degtyarev S.K."/>
            <person name="Dryden D.T."/>
            <person name="Dybvig K."/>
            <person name="Firman K."/>
            <person name="Gromova E.S."/>
            <person name="Gumport R.I."/>
            <person name="Halford S.E."/>
            <person name="Hattman S."/>
            <person name="Heitman J."/>
            <person name="Hornby D.P."/>
            <person name="Janulaitis A."/>
            <person name="Jeltsch A."/>
            <person name="Josephsen J."/>
            <person name="Kiss A."/>
            <person name="Klaenhammer T.R."/>
            <person name="Kobayashi I."/>
            <person name="Kong H."/>
            <person name="Krueger D.H."/>
            <person name="Lacks S."/>
            <person name="Marinus M.G."/>
            <person name="Miyahara M."/>
            <person name="Morgan R.D."/>
            <person name="Murray N.E."/>
            <person name="Nagaraja V."/>
            <person name="Piekarowicz A."/>
            <person name="Pingoud A."/>
            <person name="Raleigh E."/>
            <person name="Rao D.N."/>
            <person name="Reich N."/>
            <person name="Repin V.E."/>
            <person name="Selker E.U."/>
            <person name="Shaw P.C."/>
            <person name="Stein D.C."/>
            <person name="Stoddard B.L."/>
            <person name="Szybalski W."/>
            <person name="Trautner T.A."/>
            <person name="Van Etten J.L."/>
            <person name="Vitor J.M."/>
            <person name="Wilson G.G."/>
            <person name="Xu S.Y."/>
        </authorList>
    </citation>
    <scope>NOMENCLATURE</scope>
    <scope>SUBTYPE</scope>
</reference>
<feature type="chain" id="PRO_0000077316" description="Type II restriction enzyme HaeII">
    <location>
        <begin position="1"/>
        <end position="352"/>
    </location>
</feature>
<proteinExistence type="predicted"/>
<organism>
    <name type="scientific">Haemophilus aegyptius</name>
    <dbReference type="NCBI Taxonomy" id="197575"/>
    <lineage>
        <taxon>Bacteria</taxon>
        <taxon>Pseudomonadati</taxon>
        <taxon>Pseudomonadota</taxon>
        <taxon>Gammaproteobacteria</taxon>
        <taxon>Pasteurellales</taxon>
        <taxon>Pasteurellaceae</taxon>
        <taxon>Haemophilus</taxon>
    </lineage>
</organism>
<accession>O30869</accession>
<comment type="function">
    <text evidence="1">A P subtype restriction enzyme that recognizes the double-stranded sequence 5'-RGCGCY-3' and cleaves after C-5.</text>
</comment>
<comment type="catalytic activity">
    <reaction>
        <text>Endonucleolytic cleavage of DNA to give specific double-stranded fragments with terminal 5'-phosphates.</text>
        <dbReference type="EC" id="3.1.21.4"/>
    </reaction>
</comment>
<evidence type="ECO:0000303" key="1">
    <source>
    </source>
</evidence>
<name>T2H2_HAEAE</name>
<gene>
    <name type="primary">haeIIR</name>
    <name type="synonym">dcrA</name>
</gene>
<sequence length="352" mass="40801">MNDIQVAKESLDKIIKKARVHLYKPIQIAEILYQDRVNKNINLLDKETYRNISKKWRDVICIRFLGRVSTSSAKYQDDLFNDNAMPPKHLNILGEMNRKTNGGVESYIYKKFFERFNQMSSALEYSYSRTPDNFHLSEFLALFWLEPGLKRSIDKVYEIVVYALFSSLIEALGVKVKIDLDLSNIDLLKEFEDFTRQIISLDSENTSLELNAKINRVGVTNASDRGLDMWANFGMAIQIKHLSLTEELAENIVSSVSSDRIVIVCKESEEKLILSLLNQIGWRSKIQSIITEADLIKWYDKALRGKSAYLVGSKILEHIRNEINLEFPATDIVDFNHFFHEREYNKALDIEK</sequence>
<keyword id="KW-0255">Endonuclease</keyword>
<keyword id="KW-0378">Hydrolase</keyword>
<keyword id="KW-0540">Nuclease</keyword>
<keyword id="KW-0680">Restriction system</keyword>